<dbReference type="EMBL" id="AJ965256">
    <property type="protein sequence ID" value="CAI82460.1"/>
    <property type="molecule type" value="Genomic_DNA"/>
</dbReference>
<dbReference type="RefSeq" id="WP_011308818.1">
    <property type="nucleotide sequence ID" value="NC_007356.1"/>
</dbReference>
<dbReference type="SMR" id="Q3ZWU0"/>
<dbReference type="KEGG" id="deh:cbdbA217"/>
<dbReference type="HOGENOM" id="CLU_094511_1_0_0"/>
<dbReference type="Proteomes" id="UP000000433">
    <property type="component" value="Chromosome"/>
</dbReference>
<dbReference type="Gene3D" id="1.10.10.10">
    <property type="entry name" value="Winged helix-like DNA-binding domain superfamily/Winged helix DNA-binding domain"/>
    <property type="match status" value="1"/>
</dbReference>
<dbReference type="HAMAP" id="MF_00674">
    <property type="entry name" value="UPF0251"/>
    <property type="match status" value="1"/>
</dbReference>
<dbReference type="InterPro" id="IPR013324">
    <property type="entry name" value="RNA_pol_sigma_r3/r4-like"/>
</dbReference>
<dbReference type="InterPro" id="IPR002852">
    <property type="entry name" value="UPF0251"/>
</dbReference>
<dbReference type="InterPro" id="IPR036388">
    <property type="entry name" value="WH-like_DNA-bd_sf"/>
</dbReference>
<dbReference type="PANTHER" id="PTHR37478">
    <property type="match status" value="1"/>
</dbReference>
<dbReference type="PANTHER" id="PTHR37478:SF2">
    <property type="entry name" value="UPF0251 PROTEIN TK0562"/>
    <property type="match status" value="1"/>
</dbReference>
<dbReference type="Pfam" id="PF02001">
    <property type="entry name" value="DUF134"/>
    <property type="match status" value="1"/>
</dbReference>
<dbReference type="SUPFAM" id="SSF88659">
    <property type="entry name" value="Sigma3 and sigma4 domains of RNA polymerase sigma factors"/>
    <property type="match status" value="1"/>
</dbReference>
<gene>
    <name type="ordered locus">cbdbA217</name>
</gene>
<accession>Q3ZWU0</accession>
<proteinExistence type="inferred from homology"/>
<feature type="chain" id="PRO_1000044747" description="UPF0251 protein cbdbA217">
    <location>
        <begin position="1"/>
        <end position="117"/>
    </location>
</feature>
<organism>
    <name type="scientific">Dehalococcoides mccartyi (strain CBDB1)</name>
    <dbReference type="NCBI Taxonomy" id="255470"/>
    <lineage>
        <taxon>Bacteria</taxon>
        <taxon>Bacillati</taxon>
        <taxon>Chloroflexota</taxon>
        <taxon>Dehalococcoidia</taxon>
        <taxon>Dehalococcoidales</taxon>
        <taxon>Dehalococcoidaceae</taxon>
        <taxon>Dehalococcoides</taxon>
    </lineage>
</organism>
<evidence type="ECO:0000255" key="1">
    <source>
        <dbReference type="HAMAP-Rule" id="MF_00674"/>
    </source>
</evidence>
<comment type="similarity">
    <text evidence="1">Belongs to the UPF0251 family.</text>
</comment>
<protein>
    <recommendedName>
        <fullName evidence="1">UPF0251 protein cbdbA217</fullName>
    </recommendedName>
</protein>
<sequence>MPRPYKCRRISEIPKVAYYKPAGIPLSMLEENQLSTEEAEALRLKDLLGLEQAQAALQMNISRPTFQRMLYSARYKVADALLNGKALRIEGGVFEIDARPCCQRQTPPCQPDPPEQT</sequence>
<name>Y217_DEHMC</name>
<reference key="1">
    <citation type="journal article" date="2005" name="Nat. Biotechnol.">
        <title>Genome sequence of the chlorinated compound-respiring bacterium Dehalococcoides species strain CBDB1.</title>
        <authorList>
            <person name="Kube M."/>
            <person name="Beck A."/>
            <person name="Zinder S.H."/>
            <person name="Kuhl H."/>
            <person name="Reinhardt R."/>
            <person name="Adrian L."/>
        </authorList>
    </citation>
    <scope>NUCLEOTIDE SEQUENCE [LARGE SCALE GENOMIC DNA]</scope>
    <source>
        <strain>CBDB1</strain>
    </source>
</reference>